<feature type="chain" id="PRO_0000134252" description="Small ribosomal subunit protein uS2">
    <location>
        <begin position="1"/>
        <end position="259"/>
    </location>
</feature>
<organism>
    <name type="scientific">Streptococcus pneumoniae (strain ATCC BAA-255 / R6)</name>
    <dbReference type="NCBI Taxonomy" id="171101"/>
    <lineage>
        <taxon>Bacteria</taxon>
        <taxon>Bacillati</taxon>
        <taxon>Bacillota</taxon>
        <taxon>Bacilli</taxon>
        <taxon>Lactobacillales</taxon>
        <taxon>Streptococcaceae</taxon>
        <taxon>Streptococcus</taxon>
    </lineage>
</organism>
<proteinExistence type="inferred from homology"/>
<gene>
    <name evidence="1" type="primary">rpsB</name>
    <name type="ordered locus">spr2020</name>
</gene>
<name>RS2_STRR6</name>
<keyword id="KW-1185">Reference proteome</keyword>
<keyword id="KW-0687">Ribonucleoprotein</keyword>
<keyword id="KW-0689">Ribosomal protein</keyword>
<protein>
    <recommendedName>
        <fullName evidence="1">Small ribosomal subunit protein uS2</fullName>
    </recommendedName>
    <alternativeName>
        <fullName evidence="2">30S ribosomal protein S2</fullName>
    </alternativeName>
</protein>
<accession>Q8CWM8</accession>
<comment type="similarity">
    <text evidence="1">Belongs to the universal ribosomal protein uS2 family.</text>
</comment>
<evidence type="ECO:0000255" key="1">
    <source>
        <dbReference type="HAMAP-Rule" id="MF_00291"/>
    </source>
</evidence>
<evidence type="ECO:0000305" key="2"/>
<reference key="1">
    <citation type="journal article" date="2001" name="J. Bacteriol.">
        <title>Genome of the bacterium Streptococcus pneumoniae strain R6.</title>
        <authorList>
            <person name="Hoskins J."/>
            <person name="Alborn W.E. Jr."/>
            <person name="Arnold J."/>
            <person name="Blaszczak L.C."/>
            <person name="Burgett S."/>
            <person name="DeHoff B.S."/>
            <person name="Estrem S.T."/>
            <person name="Fritz L."/>
            <person name="Fu D.-J."/>
            <person name="Fuller W."/>
            <person name="Geringer C."/>
            <person name="Gilmour R."/>
            <person name="Glass J.S."/>
            <person name="Khoja H."/>
            <person name="Kraft A.R."/>
            <person name="Lagace R.E."/>
            <person name="LeBlanc D.J."/>
            <person name="Lee L.N."/>
            <person name="Lefkowitz E.J."/>
            <person name="Lu J."/>
            <person name="Matsushima P."/>
            <person name="McAhren S.M."/>
            <person name="McHenney M."/>
            <person name="McLeaster K."/>
            <person name="Mundy C.W."/>
            <person name="Nicas T.I."/>
            <person name="Norris F.H."/>
            <person name="O'Gara M."/>
            <person name="Peery R.B."/>
            <person name="Robertson G.T."/>
            <person name="Rockey P."/>
            <person name="Sun P.-M."/>
            <person name="Winkler M.E."/>
            <person name="Yang Y."/>
            <person name="Young-Bellido M."/>
            <person name="Zhao G."/>
            <person name="Zook C.A."/>
            <person name="Baltz R.H."/>
            <person name="Jaskunas S.R."/>
            <person name="Rosteck P.R. Jr."/>
            <person name="Skatrud P.L."/>
            <person name="Glass J.I."/>
        </authorList>
    </citation>
    <scope>NUCLEOTIDE SEQUENCE [LARGE SCALE GENOMIC DNA]</scope>
    <source>
        <strain>ATCC BAA-255 / R6</strain>
    </source>
</reference>
<dbReference type="EMBL" id="AE007317">
    <property type="protein sequence ID" value="AAL00822.1"/>
    <property type="molecule type" value="Genomic_DNA"/>
</dbReference>
<dbReference type="PIR" id="A99524">
    <property type="entry name" value="A99524"/>
</dbReference>
<dbReference type="RefSeq" id="NP_359611.1">
    <property type="nucleotide sequence ID" value="NC_003098.1"/>
</dbReference>
<dbReference type="RefSeq" id="WP_000268467.1">
    <property type="nucleotide sequence ID" value="NC_003098.1"/>
</dbReference>
<dbReference type="SMR" id="Q8CWM8"/>
<dbReference type="STRING" id="171101.spr2020"/>
<dbReference type="KEGG" id="spr:spr2020"/>
<dbReference type="PATRIC" id="fig|171101.6.peg.2186"/>
<dbReference type="eggNOG" id="COG0052">
    <property type="taxonomic scope" value="Bacteria"/>
</dbReference>
<dbReference type="HOGENOM" id="CLU_040318_1_2_9"/>
<dbReference type="PRO" id="PR:Q8CWM8"/>
<dbReference type="Proteomes" id="UP000000586">
    <property type="component" value="Chromosome"/>
</dbReference>
<dbReference type="GO" id="GO:0022627">
    <property type="term" value="C:cytosolic small ribosomal subunit"/>
    <property type="evidence" value="ECO:0000318"/>
    <property type="project" value="GO_Central"/>
</dbReference>
<dbReference type="GO" id="GO:0003735">
    <property type="term" value="F:structural constituent of ribosome"/>
    <property type="evidence" value="ECO:0000318"/>
    <property type="project" value="GO_Central"/>
</dbReference>
<dbReference type="GO" id="GO:0006412">
    <property type="term" value="P:translation"/>
    <property type="evidence" value="ECO:0007669"/>
    <property type="project" value="UniProtKB-UniRule"/>
</dbReference>
<dbReference type="CDD" id="cd01425">
    <property type="entry name" value="RPS2"/>
    <property type="match status" value="1"/>
</dbReference>
<dbReference type="FunFam" id="1.10.287.610:FF:000001">
    <property type="entry name" value="30S ribosomal protein S2"/>
    <property type="match status" value="1"/>
</dbReference>
<dbReference type="Gene3D" id="3.40.50.10490">
    <property type="entry name" value="Glucose-6-phosphate isomerase like protein, domain 1"/>
    <property type="match status" value="1"/>
</dbReference>
<dbReference type="Gene3D" id="1.10.287.610">
    <property type="entry name" value="Helix hairpin bin"/>
    <property type="match status" value="1"/>
</dbReference>
<dbReference type="HAMAP" id="MF_00291_B">
    <property type="entry name" value="Ribosomal_uS2_B"/>
    <property type="match status" value="1"/>
</dbReference>
<dbReference type="InterPro" id="IPR001865">
    <property type="entry name" value="Ribosomal_uS2"/>
</dbReference>
<dbReference type="InterPro" id="IPR005706">
    <property type="entry name" value="Ribosomal_uS2_bac/mit/plastid"/>
</dbReference>
<dbReference type="InterPro" id="IPR018130">
    <property type="entry name" value="Ribosomal_uS2_CS"/>
</dbReference>
<dbReference type="InterPro" id="IPR023591">
    <property type="entry name" value="Ribosomal_uS2_flav_dom_sf"/>
</dbReference>
<dbReference type="NCBIfam" id="TIGR01011">
    <property type="entry name" value="rpsB_bact"/>
    <property type="match status" value="1"/>
</dbReference>
<dbReference type="PANTHER" id="PTHR12534">
    <property type="entry name" value="30S RIBOSOMAL PROTEIN S2 PROKARYOTIC AND ORGANELLAR"/>
    <property type="match status" value="1"/>
</dbReference>
<dbReference type="PANTHER" id="PTHR12534:SF0">
    <property type="entry name" value="SMALL RIBOSOMAL SUBUNIT PROTEIN US2M"/>
    <property type="match status" value="1"/>
</dbReference>
<dbReference type="Pfam" id="PF00318">
    <property type="entry name" value="Ribosomal_S2"/>
    <property type="match status" value="1"/>
</dbReference>
<dbReference type="PRINTS" id="PR00395">
    <property type="entry name" value="RIBOSOMALS2"/>
</dbReference>
<dbReference type="SUPFAM" id="SSF52313">
    <property type="entry name" value="Ribosomal protein S2"/>
    <property type="match status" value="1"/>
</dbReference>
<dbReference type="PROSITE" id="PS00962">
    <property type="entry name" value="RIBOSOMAL_S2_1"/>
    <property type="match status" value="1"/>
</dbReference>
<sequence length="259" mass="28898">MAVISMKQLLEAGVHFGHQTRRWNPKMAKYIFTERNGIHVIDLQQTVKYADQAYDFMRDAAANDAVVLFVGTKKQAADAVAEEAVRSGQYFINHRWLGGTLTNWGTIQKRIARLKEIKRMEEDGTFEVLPKKEVALLNKQRARLEKFLGGIEDMPRIPDVMYVVDPHKEQIAVKEAKKLGIPVVAMVDTNTDPDDIDVIIPANDDAIRAVKLITAKLADAIIEGRQGEDAVAVEAEFAASETQADSIEEIVEVVEGDNK</sequence>